<organism>
    <name type="scientific">Mus musculus</name>
    <name type="common">Mouse</name>
    <dbReference type="NCBI Taxonomy" id="10090"/>
    <lineage>
        <taxon>Eukaryota</taxon>
        <taxon>Metazoa</taxon>
        <taxon>Chordata</taxon>
        <taxon>Craniata</taxon>
        <taxon>Vertebrata</taxon>
        <taxon>Euteleostomi</taxon>
        <taxon>Mammalia</taxon>
        <taxon>Eutheria</taxon>
        <taxon>Euarchontoglires</taxon>
        <taxon>Glires</taxon>
        <taxon>Rodentia</taxon>
        <taxon>Myomorpha</taxon>
        <taxon>Muroidea</taxon>
        <taxon>Muridae</taxon>
        <taxon>Murinae</taxon>
        <taxon>Mus</taxon>
        <taxon>Mus</taxon>
    </lineage>
</organism>
<gene>
    <name type="primary">Ice2</name>
    <name type="synonym">Narg2</name>
</gene>
<proteinExistence type="evidence at protein level"/>
<feature type="chain" id="PRO_0000297965" description="Little elongation complex subunit 2">
    <location>
        <begin position="1"/>
        <end position="988"/>
    </location>
</feature>
<feature type="region of interest" description="Disordered" evidence="3">
    <location>
        <begin position="402"/>
        <end position="422"/>
    </location>
</feature>
<feature type="region of interest" description="Disordered" evidence="3">
    <location>
        <begin position="500"/>
        <end position="587"/>
    </location>
</feature>
<feature type="region of interest" description="Disordered" evidence="3">
    <location>
        <begin position="604"/>
        <end position="633"/>
    </location>
</feature>
<feature type="region of interest" description="Disordered" evidence="3">
    <location>
        <begin position="673"/>
        <end position="706"/>
    </location>
</feature>
<feature type="region of interest" description="Disordered" evidence="3">
    <location>
        <begin position="942"/>
        <end position="968"/>
    </location>
</feature>
<feature type="compositionally biased region" description="Low complexity" evidence="3">
    <location>
        <begin position="413"/>
        <end position="422"/>
    </location>
</feature>
<feature type="compositionally biased region" description="Basic and acidic residues" evidence="3">
    <location>
        <begin position="534"/>
        <end position="547"/>
    </location>
</feature>
<feature type="compositionally biased region" description="Low complexity" evidence="3">
    <location>
        <begin position="563"/>
        <end position="576"/>
    </location>
</feature>
<feature type="compositionally biased region" description="Low complexity" evidence="3">
    <location>
        <begin position="615"/>
        <end position="629"/>
    </location>
</feature>
<feature type="modified residue" description="Phosphoserine" evidence="2">
    <location>
        <position position="322"/>
    </location>
</feature>
<feature type="modified residue" description="Phosphoserine" evidence="8 9">
    <location>
        <position position="587"/>
    </location>
</feature>
<feature type="modified residue" description="Phosphothreonine" evidence="8 9">
    <location>
        <position position="589"/>
    </location>
</feature>
<feature type="splice variant" id="VSP_027442" description="In isoform 2." evidence="6">
    <original>DMKKHVNEE</original>
    <variation>VCVYSVHQL</variation>
    <location>
        <begin position="133"/>
        <end position="141"/>
    </location>
</feature>
<feature type="splice variant" id="VSP_027443" description="In isoform 2." evidence="6">
    <location>
        <begin position="142"/>
        <end position="988"/>
    </location>
</feature>
<feature type="sequence conflict" description="In Ref. 2; BAE22043." evidence="7" ref="2">
    <original>P</original>
    <variation>T</variation>
    <location>
        <position position="66"/>
    </location>
</feature>
<feature type="sequence conflict" description="In Ref. 4; AAH18458." evidence="7" ref="4">
    <original>I</original>
    <variation>V</variation>
    <location>
        <position position="754"/>
    </location>
</feature>
<feature type="sequence conflict" description="In Ref. 4; AAH18458." evidence="7" ref="4">
    <original>A</original>
    <variation>T</variation>
    <location>
        <position position="831"/>
    </location>
</feature>
<protein>
    <recommendedName>
        <fullName>Little elongation complex subunit 2</fullName>
    </recommendedName>
    <alternativeName>
        <fullName>Interactor of little elongator complex ELL subunit 2</fullName>
    </alternativeName>
    <alternativeName>
        <fullName>NMDA receptor-regulated protein 2</fullName>
    </alternativeName>
</protein>
<dbReference type="EMBL" id="AY244558">
    <property type="protein sequence ID" value="AAP56233.1"/>
    <property type="molecule type" value="mRNA"/>
</dbReference>
<dbReference type="EMBL" id="AK046121">
    <property type="protein sequence ID" value="BAC32608.1"/>
    <property type="molecule type" value="mRNA"/>
</dbReference>
<dbReference type="EMBL" id="AK041772">
    <property type="protein sequence ID" value="BAE20602.1"/>
    <property type="molecule type" value="mRNA"/>
</dbReference>
<dbReference type="EMBL" id="AK134186">
    <property type="protein sequence ID" value="BAE22043.1"/>
    <property type="molecule type" value="mRNA"/>
</dbReference>
<dbReference type="EMBL" id="CT009708">
    <property type="status" value="NOT_ANNOTATED_CDS"/>
    <property type="molecule type" value="Genomic_DNA"/>
</dbReference>
<dbReference type="EMBL" id="BC018458">
    <property type="protein sequence ID" value="AAH18458.1"/>
    <property type="status" value="ALT_INIT"/>
    <property type="molecule type" value="mRNA"/>
</dbReference>
<dbReference type="EMBL" id="BC068183">
    <property type="protein sequence ID" value="AAH68183.1"/>
    <property type="molecule type" value="mRNA"/>
</dbReference>
<dbReference type="EMBL" id="BC080786">
    <property type="protein sequence ID" value="AAH80786.1"/>
    <property type="status" value="ALT_FRAME"/>
    <property type="molecule type" value="mRNA"/>
</dbReference>
<dbReference type="CCDS" id="CCDS23315.1">
    <molecule id="Q3UZ18-1"/>
</dbReference>
<dbReference type="RefSeq" id="NP_663593.2">
    <molecule id="Q3UZ18-1"/>
    <property type="nucleotide sequence ID" value="NM_145618.3"/>
</dbReference>
<dbReference type="RefSeq" id="XP_006511636.1">
    <molecule id="Q3UZ18-1"/>
    <property type="nucleotide sequence ID" value="XM_006511573.5"/>
</dbReference>
<dbReference type="RefSeq" id="XP_036011313.1">
    <molecule id="Q3UZ18-1"/>
    <property type="nucleotide sequence ID" value="XM_036155420.1"/>
</dbReference>
<dbReference type="BioGRID" id="220246">
    <property type="interactions" value="7"/>
</dbReference>
<dbReference type="FunCoup" id="Q3UZ18">
    <property type="interactions" value="5275"/>
</dbReference>
<dbReference type="STRING" id="10090.ENSMUSP00000034761"/>
<dbReference type="GlyGen" id="Q3UZ18">
    <property type="glycosylation" value="2 sites"/>
</dbReference>
<dbReference type="iPTMnet" id="Q3UZ18"/>
<dbReference type="PhosphoSitePlus" id="Q3UZ18"/>
<dbReference type="jPOST" id="Q3UZ18"/>
<dbReference type="PaxDb" id="10090-ENSMUSP00000034761"/>
<dbReference type="PeptideAtlas" id="Q3UZ18"/>
<dbReference type="ProteomicsDB" id="267087">
    <molecule id="Q3UZ18-1"/>
</dbReference>
<dbReference type="ProteomicsDB" id="267088">
    <molecule id="Q3UZ18-2"/>
</dbReference>
<dbReference type="Pumba" id="Q3UZ18"/>
<dbReference type="Antibodypedia" id="25471">
    <property type="antibodies" value="114 antibodies from 19 providers"/>
</dbReference>
<dbReference type="DNASU" id="93697"/>
<dbReference type="Ensembl" id="ENSMUST00000034761.15">
    <molecule id="Q3UZ18-1"/>
    <property type="protein sequence ID" value="ENSMUSP00000034761.9"/>
    <property type="gene ID" value="ENSMUSG00000032235.16"/>
</dbReference>
<dbReference type="Ensembl" id="ENSMUST00000117246.8">
    <molecule id="Q3UZ18-2"/>
    <property type="protein sequence ID" value="ENSMUSP00000112700.2"/>
    <property type="gene ID" value="ENSMUSG00000032235.16"/>
</dbReference>
<dbReference type="GeneID" id="93697"/>
<dbReference type="KEGG" id="mmu:93697"/>
<dbReference type="UCSC" id="uc009qnd.1">
    <molecule id="Q3UZ18-2"/>
    <property type="organism name" value="mouse"/>
</dbReference>
<dbReference type="UCSC" id="uc009qne.1">
    <molecule id="Q3UZ18-1"/>
    <property type="organism name" value="mouse"/>
</dbReference>
<dbReference type="AGR" id="MGI:2135947"/>
<dbReference type="CTD" id="79664"/>
<dbReference type="MGI" id="MGI:2135947">
    <property type="gene designation" value="Ice2"/>
</dbReference>
<dbReference type="VEuPathDB" id="HostDB:ENSMUSG00000032235"/>
<dbReference type="eggNOG" id="ENOG502QUWA">
    <property type="taxonomic scope" value="Eukaryota"/>
</dbReference>
<dbReference type="GeneTree" id="ENSGT00390000006883"/>
<dbReference type="HOGENOM" id="CLU_327237_0_0_1"/>
<dbReference type="InParanoid" id="Q3UZ18"/>
<dbReference type="OMA" id="LPFHQQH"/>
<dbReference type="OrthoDB" id="6288737at2759"/>
<dbReference type="PhylomeDB" id="Q3UZ18"/>
<dbReference type="TreeFam" id="TF106272"/>
<dbReference type="Reactome" id="R-MMU-6807505">
    <property type="pathway name" value="RNA polymerase II transcribes snRNA genes"/>
</dbReference>
<dbReference type="BioGRID-ORCS" id="93697">
    <property type="hits" value="2 hits in 76 CRISPR screens"/>
</dbReference>
<dbReference type="ChiTaRS" id="Ice2">
    <property type="organism name" value="mouse"/>
</dbReference>
<dbReference type="PRO" id="PR:Q3UZ18"/>
<dbReference type="Proteomes" id="UP000000589">
    <property type="component" value="Chromosome 9"/>
</dbReference>
<dbReference type="RNAct" id="Q3UZ18">
    <property type="molecule type" value="protein"/>
</dbReference>
<dbReference type="Bgee" id="ENSMUSG00000032235">
    <property type="expression patterns" value="Expressed in animal zygote and 249 other cell types or tissues"/>
</dbReference>
<dbReference type="ExpressionAtlas" id="Q3UZ18">
    <property type="expression patterns" value="baseline and differential"/>
</dbReference>
<dbReference type="GO" id="GO:0015030">
    <property type="term" value="C:Cajal body"/>
    <property type="evidence" value="ECO:0000250"/>
    <property type="project" value="UniProtKB"/>
</dbReference>
<dbReference type="GO" id="GO:0005829">
    <property type="term" value="C:cytosol"/>
    <property type="evidence" value="ECO:0007669"/>
    <property type="project" value="Ensembl"/>
</dbReference>
<dbReference type="GO" id="GO:0000791">
    <property type="term" value="C:euchromatin"/>
    <property type="evidence" value="ECO:0000250"/>
    <property type="project" value="UniProtKB"/>
</dbReference>
<dbReference type="GO" id="GO:0035363">
    <property type="term" value="C:histone locus body"/>
    <property type="evidence" value="ECO:0000250"/>
    <property type="project" value="UniProtKB"/>
</dbReference>
<dbReference type="GO" id="GO:0005634">
    <property type="term" value="C:nucleus"/>
    <property type="evidence" value="ECO:0000314"/>
    <property type="project" value="MGI"/>
</dbReference>
<dbReference type="GO" id="GO:0008023">
    <property type="term" value="C:transcription elongation factor complex"/>
    <property type="evidence" value="ECO:0000250"/>
    <property type="project" value="UniProtKB"/>
</dbReference>
<dbReference type="GO" id="GO:0045945">
    <property type="term" value="P:positive regulation of transcription by RNA polymerase III"/>
    <property type="evidence" value="ECO:0000250"/>
    <property type="project" value="UniProtKB"/>
</dbReference>
<dbReference type="GO" id="GO:0042795">
    <property type="term" value="P:snRNA transcription by RNA polymerase II"/>
    <property type="evidence" value="ECO:0000250"/>
    <property type="project" value="UniProtKB"/>
</dbReference>
<dbReference type="GO" id="GO:0042796">
    <property type="term" value="P:snRNA transcription by RNA polymerase III"/>
    <property type="evidence" value="ECO:0000250"/>
    <property type="project" value="UniProtKB"/>
</dbReference>
<dbReference type="InterPro" id="IPR019535">
    <property type="entry name" value="ICE2_C"/>
</dbReference>
<dbReference type="PANTHER" id="PTHR14633">
    <property type="entry name" value="LITTLE ELONGATION COMPLEX SUBUNIT 2"/>
    <property type="match status" value="1"/>
</dbReference>
<dbReference type="PANTHER" id="PTHR14633:SF3">
    <property type="entry name" value="LITTLE ELONGATION COMPLEX SUBUNIT 2"/>
    <property type="match status" value="1"/>
</dbReference>
<dbReference type="Pfam" id="PF10505">
    <property type="entry name" value="NARG2_C"/>
    <property type="match status" value="1"/>
</dbReference>
<sequence>MSSSITMSEPRLNWDVTPKNGLKAFFSPENYKDHSMAPSLKELYILSNRRIGENLSVSASSVENEPAVSSATQAKEKVGMILLPKPRVPYPRFSRFSQREQRTYVDLLAKYAKLPSSSKTVGTNTNEYLQYLDMKKHVNEEVNEFLKFLQNSAKKCAQDYNMLSDEARLFTEQLLRACIEQVKKYPEFYTLHEVTSLMGFFPFKTEMGLKLEKTLLVLGSAKFVKTAFPSMPVKLQLSKEDMSSIETPQQKAEVMHCDISKDPNAEKLVSRYHPQIALTSQALFTLLNNHGPSYKEQWEIPVCVEMIAVEGSKPVKVIYINSPLPRKQMTMRERNQIFHEVPLKHIISKNTSVPVSAVFMDKPEEYTSEVDMPTEAGECRKIETLENLDMDFDGDVTELETFGVTTTSPPRSPSSESDSSAPLMTDVHAVPKIAAVPLAPATPVAPTMPVAPATPVTPTMPMAPATPEASATPNITDDSRSLCQILMKQLQKEKQLFSGVEGGPEGCKNKDDQGLEPCGEEVPSANAKSLTQDNEVHRTEGISKESDVGVLCTNDERQGGQGNANNPNNTATASEAAESEKGIPCGSDTDEDCLIIDTESRSCDGKTADLGSRPNSSAQASAGNQATTTVSEESCVLKKPIKRVYKKFDPVGEILKMQDELLKPVSRKVPELPLTNSEESKQPPASEQPSAALDAAPWPKSSWPSAFQKPKGRLPYELQDYVEDTSEYIAPQEGNFVYKLFSLQDLLLLVRCSIQRVETRPRSKKRKKIRRQFPVYVLPKVEYQGCYGVEALTESELCRFWTESLLHSNCSFYVGHIDAFTSKLFMLEEIASEELKEKLAALKISSLFNILQHILKKLCSLQEGSYLLSHAAEDSSLLIYKTSDGKVTRTAYNLHKAHCDLPGVPSSLSVPWVPLDPSYLLPYHIHHGRVPCTFPPKPLRPAAQAKVGGTRMPTRNHRNPVSMETKSSCLPVQQVENEGVARNKRKIM</sequence>
<comment type="function">
    <text evidence="1">Component of the little elongation complex (LEC), a complex required to regulate small nuclear RNA (snRNA) gene transcription by RNA polymerase II and III.</text>
</comment>
<comment type="subunit">
    <text evidence="1">Component of the little elongation complex (LEC), at least composed of ELL (ELL, ELL2 or ELL3), ZC3H8, ICE1 and ICE2. Interacts with ICE1 (via C-terminus domain). Interacts with ELL (By similarity).</text>
</comment>
<comment type="subcellular location">
    <subcellularLocation>
        <location evidence="5">Nucleus</location>
    </subcellularLocation>
    <text evidence="1">Colocalizes with COIL in subnuclear Cajal and histone locus bodies. Translocates in the LEC complex to Cajal and histone locus bodies at snRNA genes in a ICE1-dependent manner. Associates to transcriptionally active chromatin at snRNA genes (By similarity).</text>
</comment>
<comment type="alternative products">
    <event type="alternative splicing"/>
    <isoform>
        <id>Q3UZ18-1</id>
        <name>1</name>
        <sequence type="displayed"/>
    </isoform>
    <isoform>
        <id>Q3UZ18-2</id>
        <name>2</name>
        <sequence type="described" ref="VSP_027442 VSP_027443"/>
    </isoform>
</comment>
<comment type="tissue specificity">
    <text evidence="4">Expressed in brain, kidney, liver and testis.</text>
</comment>
<comment type="developmental stage">
    <text evidence="4">Expressed in brain from 13 dpc to P0, and down-regulated after birth.</text>
</comment>
<comment type="induction">
    <text evidence="4 5">Down-regulated during neuronal differentiation, probably by NMDA receptor.</text>
</comment>
<comment type="similarity">
    <text evidence="7">Belongs to the ICE2 family.</text>
</comment>
<comment type="sequence caution" evidence="7">
    <conflict type="erroneous initiation">
        <sequence resource="EMBL-CDS" id="AAH18458"/>
    </conflict>
</comment>
<comment type="sequence caution" evidence="7">
    <conflict type="frameshift">
        <sequence resource="EMBL-CDS" id="AAH80786"/>
    </conflict>
</comment>
<name>ICE2_MOUSE</name>
<reference key="1">
    <citation type="journal article" date="2004" name="Eur. J. Biochem.">
        <title>NARG2 encodes a novel nuclear protein with (S/T)PXX motifs that is expressed during development.</title>
        <authorList>
            <person name="Sugiura N."/>
            <person name="Dadashev V."/>
            <person name="Corriveau R.A."/>
        </authorList>
    </citation>
    <scope>NUCLEOTIDE SEQUENCE [MRNA] (ISOFORM 1)</scope>
    <scope>SUBCELLULAR LOCATION</scope>
    <scope>INDUCTION</scope>
</reference>
<reference key="2">
    <citation type="journal article" date="2005" name="Science">
        <title>The transcriptional landscape of the mammalian genome.</title>
        <authorList>
            <person name="Carninci P."/>
            <person name="Kasukawa T."/>
            <person name="Katayama S."/>
            <person name="Gough J."/>
            <person name="Frith M.C."/>
            <person name="Maeda N."/>
            <person name="Oyama R."/>
            <person name="Ravasi T."/>
            <person name="Lenhard B."/>
            <person name="Wells C."/>
            <person name="Kodzius R."/>
            <person name="Shimokawa K."/>
            <person name="Bajic V.B."/>
            <person name="Brenner S.E."/>
            <person name="Batalov S."/>
            <person name="Forrest A.R."/>
            <person name="Zavolan M."/>
            <person name="Davis M.J."/>
            <person name="Wilming L.G."/>
            <person name="Aidinis V."/>
            <person name="Allen J.E."/>
            <person name="Ambesi-Impiombato A."/>
            <person name="Apweiler R."/>
            <person name="Aturaliya R.N."/>
            <person name="Bailey T.L."/>
            <person name="Bansal M."/>
            <person name="Baxter L."/>
            <person name="Beisel K.W."/>
            <person name="Bersano T."/>
            <person name="Bono H."/>
            <person name="Chalk A.M."/>
            <person name="Chiu K.P."/>
            <person name="Choudhary V."/>
            <person name="Christoffels A."/>
            <person name="Clutterbuck D.R."/>
            <person name="Crowe M.L."/>
            <person name="Dalla E."/>
            <person name="Dalrymple B.P."/>
            <person name="de Bono B."/>
            <person name="Della Gatta G."/>
            <person name="di Bernardo D."/>
            <person name="Down T."/>
            <person name="Engstrom P."/>
            <person name="Fagiolini M."/>
            <person name="Faulkner G."/>
            <person name="Fletcher C.F."/>
            <person name="Fukushima T."/>
            <person name="Furuno M."/>
            <person name="Futaki S."/>
            <person name="Gariboldi M."/>
            <person name="Georgii-Hemming P."/>
            <person name="Gingeras T.R."/>
            <person name="Gojobori T."/>
            <person name="Green R.E."/>
            <person name="Gustincich S."/>
            <person name="Harbers M."/>
            <person name="Hayashi Y."/>
            <person name="Hensch T.K."/>
            <person name="Hirokawa N."/>
            <person name="Hill D."/>
            <person name="Huminiecki L."/>
            <person name="Iacono M."/>
            <person name="Ikeo K."/>
            <person name="Iwama A."/>
            <person name="Ishikawa T."/>
            <person name="Jakt M."/>
            <person name="Kanapin A."/>
            <person name="Katoh M."/>
            <person name="Kawasawa Y."/>
            <person name="Kelso J."/>
            <person name="Kitamura H."/>
            <person name="Kitano H."/>
            <person name="Kollias G."/>
            <person name="Krishnan S.P."/>
            <person name="Kruger A."/>
            <person name="Kummerfeld S.K."/>
            <person name="Kurochkin I.V."/>
            <person name="Lareau L.F."/>
            <person name="Lazarevic D."/>
            <person name="Lipovich L."/>
            <person name="Liu J."/>
            <person name="Liuni S."/>
            <person name="McWilliam S."/>
            <person name="Madan Babu M."/>
            <person name="Madera M."/>
            <person name="Marchionni L."/>
            <person name="Matsuda H."/>
            <person name="Matsuzawa S."/>
            <person name="Miki H."/>
            <person name="Mignone F."/>
            <person name="Miyake S."/>
            <person name="Morris K."/>
            <person name="Mottagui-Tabar S."/>
            <person name="Mulder N."/>
            <person name="Nakano N."/>
            <person name="Nakauchi H."/>
            <person name="Ng P."/>
            <person name="Nilsson R."/>
            <person name="Nishiguchi S."/>
            <person name="Nishikawa S."/>
            <person name="Nori F."/>
            <person name="Ohara O."/>
            <person name="Okazaki Y."/>
            <person name="Orlando V."/>
            <person name="Pang K.C."/>
            <person name="Pavan W.J."/>
            <person name="Pavesi G."/>
            <person name="Pesole G."/>
            <person name="Petrovsky N."/>
            <person name="Piazza S."/>
            <person name="Reed J."/>
            <person name="Reid J.F."/>
            <person name="Ring B.Z."/>
            <person name="Ringwald M."/>
            <person name="Rost B."/>
            <person name="Ruan Y."/>
            <person name="Salzberg S.L."/>
            <person name="Sandelin A."/>
            <person name="Schneider C."/>
            <person name="Schoenbach C."/>
            <person name="Sekiguchi K."/>
            <person name="Semple C.A."/>
            <person name="Seno S."/>
            <person name="Sessa L."/>
            <person name="Sheng Y."/>
            <person name="Shibata Y."/>
            <person name="Shimada H."/>
            <person name="Shimada K."/>
            <person name="Silva D."/>
            <person name="Sinclair B."/>
            <person name="Sperling S."/>
            <person name="Stupka E."/>
            <person name="Sugiura K."/>
            <person name="Sultana R."/>
            <person name="Takenaka Y."/>
            <person name="Taki K."/>
            <person name="Tammoja K."/>
            <person name="Tan S.L."/>
            <person name="Tang S."/>
            <person name="Taylor M.S."/>
            <person name="Tegner J."/>
            <person name="Teichmann S.A."/>
            <person name="Ueda H.R."/>
            <person name="van Nimwegen E."/>
            <person name="Verardo R."/>
            <person name="Wei C.L."/>
            <person name="Yagi K."/>
            <person name="Yamanishi H."/>
            <person name="Zabarovsky E."/>
            <person name="Zhu S."/>
            <person name="Zimmer A."/>
            <person name="Hide W."/>
            <person name="Bult C."/>
            <person name="Grimmond S.M."/>
            <person name="Teasdale R.D."/>
            <person name="Liu E.T."/>
            <person name="Brusic V."/>
            <person name="Quackenbush J."/>
            <person name="Wahlestedt C."/>
            <person name="Mattick J.S."/>
            <person name="Hume D.A."/>
            <person name="Kai C."/>
            <person name="Sasaki D."/>
            <person name="Tomaru Y."/>
            <person name="Fukuda S."/>
            <person name="Kanamori-Katayama M."/>
            <person name="Suzuki M."/>
            <person name="Aoki J."/>
            <person name="Arakawa T."/>
            <person name="Iida J."/>
            <person name="Imamura K."/>
            <person name="Itoh M."/>
            <person name="Kato T."/>
            <person name="Kawaji H."/>
            <person name="Kawagashira N."/>
            <person name="Kawashima T."/>
            <person name="Kojima M."/>
            <person name="Kondo S."/>
            <person name="Konno H."/>
            <person name="Nakano K."/>
            <person name="Ninomiya N."/>
            <person name="Nishio T."/>
            <person name="Okada M."/>
            <person name="Plessy C."/>
            <person name="Shibata K."/>
            <person name="Shiraki T."/>
            <person name="Suzuki S."/>
            <person name="Tagami M."/>
            <person name="Waki K."/>
            <person name="Watahiki A."/>
            <person name="Okamura-Oho Y."/>
            <person name="Suzuki H."/>
            <person name="Kawai J."/>
            <person name="Hayashizaki Y."/>
        </authorList>
    </citation>
    <scope>NUCLEOTIDE SEQUENCE [LARGE SCALE MRNA] (ISOFORMS 1 AND 2)</scope>
    <source>
        <strain>C57BL/6J</strain>
        <tissue>Corpora quadrigemina</tissue>
        <tissue>Thymus</tissue>
    </source>
</reference>
<reference key="3">
    <citation type="journal article" date="2009" name="PLoS Biol.">
        <title>Lineage-specific biology revealed by a finished genome assembly of the mouse.</title>
        <authorList>
            <person name="Church D.M."/>
            <person name="Goodstadt L."/>
            <person name="Hillier L.W."/>
            <person name="Zody M.C."/>
            <person name="Goldstein S."/>
            <person name="She X."/>
            <person name="Bult C.J."/>
            <person name="Agarwala R."/>
            <person name="Cherry J.L."/>
            <person name="DiCuccio M."/>
            <person name="Hlavina W."/>
            <person name="Kapustin Y."/>
            <person name="Meric P."/>
            <person name="Maglott D."/>
            <person name="Birtle Z."/>
            <person name="Marques A.C."/>
            <person name="Graves T."/>
            <person name="Zhou S."/>
            <person name="Teague B."/>
            <person name="Potamousis K."/>
            <person name="Churas C."/>
            <person name="Place M."/>
            <person name="Herschleb J."/>
            <person name="Runnheim R."/>
            <person name="Forrest D."/>
            <person name="Amos-Landgraf J."/>
            <person name="Schwartz D.C."/>
            <person name="Cheng Z."/>
            <person name="Lindblad-Toh K."/>
            <person name="Eichler E.E."/>
            <person name="Ponting C.P."/>
        </authorList>
    </citation>
    <scope>NUCLEOTIDE SEQUENCE [LARGE SCALE GENOMIC DNA]</scope>
    <source>
        <strain>C57BL/6J</strain>
    </source>
</reference>
<reference key="4">
    <citation type="journal article" date="2004" name="Genome Res.">
        <title>The status, quality, and expansion of the NIH full-length cDNA project: the Mammalian Gene Collection (MGC).</title>
        <authorList>
            <consortium name="The MGC Project Team"/>
        </authorList>
    </citation>
    <scope>NUCLEOTIDE SEQUENCE [LARGE SCALE MRNA] (ISOFORM 1)</scope>
    <source>
        <strain>C57BL/6J</strain>
        <strain>FVB/N</strain>
        <tissue>Colon</tissue>
        <tissue>Head</tissue>
        <tissue>Mammary tumor</tissue>
    </source>
</reference>
<reference key="5">
    <citation type="journal article" date="2001" name="J. Biol. Chem.">
        <title>N-methyl-D-aspartate receptors regulate a group of transiently expressed genes in the developing brain.</title>
        <authorList>
            <person name="Sugiura N."/>
            <person name="Patel R.G."/>
            <person name="Corriveau R.A."/>
        </authorList>
    </citation>
    <scope>IDENTIFICATION</scope>
    <scope>INDUCTION</scope>
    <scope>TISSUE SPECIFICITY</scope>
    <scope>DEVELOPMENTAL STAGE</scope>
</reference>
<reference key="6">
    <citation type="journal article" date="2007" name="Proc. Natl. Acad. Sci. U.S.A.">
        <title>Large-scale phosphorylation analysis of mouse liver.</title>
        <authorList>
            <person name="Villen J."/>
            <person name="Beausoleil S.A."/>
            <person name="Gerber S.A."/>
            <person name="Gygi S.P."/>
        </authorList>
    </citation>
    <scope>PHOSPHORYLATION [LARGE SCALE ANALYSIS] AT SER-587 AND THR-589</scope>
    <scope>IDENTIFICATION BY MASS SPECTROMETRY [LARGE SCALE ANALYSIS]</scope>
    <source>
        <tissue>Liver</tissue>
    </source>
</reference>
<reference key="7">
    <citation type="journal article" date="2010" name="Cell">
        <title>A tissue-specific atlas of mouse protein phosphorylation and expression.</title>
        <authorList>
            <person name="Huttlin E.L."/>
            <person name="Jedrychowski M.P."/>
            <person name="Elias J.E."/>
            <person name="Goswami T."/>
            <person name="Rad R."/>
            <person name="Beausoleil S.A."/>
            <person name="Villen J."/>
            <person name="Haas W."/>
            <person name="Sowa M.E."/>
            <person name="Gygi S.P."/>
        </authorList>
    </citation>
    <scope>PHOSPHORYLATION [LARGE SCALE ANALYSIS] AT SER-587 AND THR-589</scope>
    <scope>IDENTIFICATION BY MASS SPECTROMETRY [LARGE SCALE ANALYSIS]</scope>
    <source>
        <tissue>Spleen</tissue>
    </source>
</reference>
<accession>Q3UZ18</accession>
<accession>B0V2P1</accession>
<accession>Q66JS8</accession>
<accession>Q7TNL8</accession>
<accession>Q8BQZ1</accession>
<accession>Q8VEI2</accession>
<keyword id="KW-0025">Alternative splicing</keyword>
<keyword id="KW-0539">Nucleus</keyword>
<keyword id="KW-0597">Phosphoprotein</keyword>
<keyword id="KW-1185">Reference proteome</keyword>
<keyword id="KW-0804">Transcription</keyword>
<keyword id="KW-0805">Transcription regulation</keyword>
<evidence type="ECO:0000250" key="1"/>
<evidence type="ECO:0000250" key="2">
    <source>
        <dbReference type="UniProtKB" id="Q659A1"/>
    </source>
</evidence>
<evidence type="ECO:0000256" key="3">
    <source>
        <dbReference type="SAM" id="MobiDB-lite"/>
    </source>
</evidence>
<evidence type="ECO:0000269" key="4">
    <source>
    </source>
</evidence>
<evidence type="ECO:0000269" key="5">
    <source>
    </source>
</evidence>
<evidence type="ECO:0000303" key="6">
    <source>
    </source>
</evidence>
<evidence type="ECO:0000305" key="7"/>
<evidence type="ECO:0007744" key="8">
    <source>
    </source>
</evidence>
<evidence type="ECO:0007744" key="9">
    <source>
    </source>
</evidence>